<name>PGK_NEUCR</name>
<keyword id="KW-0067">ATP-binding</keyword>
<keyword id="KW-0963">Cytoplasm</keyword>
<keyword id="KW-0324">Glycolysis</keyword>
<keyword id="KW-0418">Kinase</keyword>
<keyword id="KW-0460">Magnesium</keyword>
<keyword id="KW-0479">Metal-binding</keyword>
<keyword id="KW-0496">Mitochondrion</keyword>
<keyword id="KW-0547">Nucleotide-binding</keyword>
<keyword id="KW-1185">Reference proteome</keyword>
<keyword id="KW-0808">Transferase</keyword>
<accession>P38667</accession>
<accession>Q7RVG7</accession>
<organism>
    <name type="scientific">Neurospora crassa (strain ATCC 24698 / 74-OR23-1A / CBS 708.71 / DSM 1257 / FGSC 987)</name>
    <dbReference type="NCBI Taxonomy" id="367110"/>
    <lineage>
        <taxon>Eukaryota</taxon>
        <taxon>Fungi</taxon>
        <taxon>Dikarya</taxon>
        <taxon>Ascomycota</taxon>
        <taxon>Pezizomycotina</taxon>
        <taxon>Sordariomycetes</taxon>
        <taxon>Sordariomycetidae</taxon>
        <taxon>Sordariales</taxon>
        <taxon>Sordariaceae</taxon>
        <taxon>Neurospora</taxon>
    </lineage>
</organism>
<sequence>MSLSNKLSIEDVDLKGKRVLIRVDFNVPLDAEKKVTNPQRIAGAIPTIKYALDHGAKAVVLMSHLGRPDGKPNPKYSLKPVVPELEKLLGKKVTFAPDCVGPEVEEIVNKADNGEVILLENLRFHIEEEGKGTDAEGNKVKADKAKVEEFRKNLTKLGDVYINDAFGTAHRAHSSMVGIDLPVKAAGFLMKKELQYFAKVLESPQRPFLSILGGAKVSDKIQLIDNLLDKVNTLIVCGGMAFTFKKTLQNMPIGNSLFDEAGAKIVPDLVKKAEKNNVKLVLPVDFTIADKFDKDANTGYATDKDGIPDGWMGLDCGEESVKLFTQAINESQTILWNGPAGVFEFDKFAKGTKATLDACVKAAEEGRTVIIGGGDTATVAAKYGVEDKLSHVSTGGGASLELLEGKALPGVVALSERQ</sequence>
<protein>
    <recommendedName>
        <fullName>Phosphoglycerate kinase</fullName>
        <ecNumber evidence="3">2.7.2.3</ecNumber>
    </recommendedName>
</protein>
<reference key="1">
    <citation type="journal article" date="1992" name="DNA Seq.">
        <title>Primary structure and in vitro expression of the N. crassa phosphoglycerate kinase.</title>
        <authorList>
            <person name="Azevedo J.E."/>
            <person name="Tropschug M."/>
            <person name="Werner S."/>
        </authorList>
    </citation>
    <scope>NUCLEOTIDE SEQUENCE [MRNA]</scope>
    <source>
        <strain>74A</strain>
    </source>
</reference>
<reference key="2">
    <citation type="journal article" date="2003" name="Nature">
        <title>The genome sequence of the filamentous fungus Neurospora crassa.</title>
        <authorList>
            <person name="Galagan J.E."/>
            <person name="Calvo S.E."/>
            <person name="Borkovich K.A."/>
            <person name="Selker E.U."/>
            <person name="Read N.D."/>
            <person name="Jaffe D.B."/>
            <person name="FitzHugh W."/>
            <person name="Ma L.-J."/>
            <person name="Smirnov S."/>
            <person name="Purcell S."/>
            <person name="Rehman B."/>
            <person name="Elkins T."/>
            <person name="Engels R."/>
            <person name="Wang S."/>
            <person name="Nielsen C.B."/>
            <person name="Butler J."/>
            <person name="Endrizzi M."/>
            <person name="Qui D."/>
            <person name="Ianakiev P."/>
            <person name="Bell-Pedersen D."/>
            <person name="Nelson M.A."/>
            <person name="Werner-Washburne M."/>
            <person name="Selitrennikoff C.P."/>
            <person name="Kinsey J.A."/>
            <person name="Braun E.L."/>
            <person name="Zelter A."/>
            <person name="Schulte U."/>
            <person name="Kothe G.O."/>
            <person name="Jedd G."/>
            <person name="Mewes H.-W."/>
            <person name="Staben C."/>
            <person name="Marcotte E."/>
            <person name="Greenberg D."/>
            <person name="Roy A."/>
            <person name="Foley K."/>
            <person name="Naylor J."/>
            <person name="Stange-Thomann N."/>
            <person name="Barrett R."/>
            <person name="Gnerre S."/>
            <person name="Kamal M."/>
            <person name="Kamvysselis M."/>
            <person name="Mauceli E.W."/>
            <person name="Bielke C."/>
            <person name="Rudd S."/>
            <person name="Frishman D."/>
            <person name="Krystofova S."/>
            <person name="Rasmussen C."/>
            <person name="Metzenberg R.L."/>
            <person name="Perkins D.D."/>
            <person name="Kroken S."/>
            <person name="Cogoni C."/>
            <person name="Macino G."/>
            <person name="Catcheside D.E.A."/>
            <person name="Li W."/>
            <person name="Pratt R.J."/>
            <person name="Osmani S.A."/>
            <person name="DeSouza C.P.C."/>
            <person name="Glass N.L."/>
            <person name="Orbach M.J."/>
            <person name="Berglund J.A."/>
            <person name="Voelker R."/>
            <person name="Yarden O."/>
            <person name="Plamann M."/>
            <person name="Seiler S."/>
            <person name="Dunlap J.C."/>
            <person name="Radford A."/>
            <person name="Aramayo R."/>
            <person name="Natvig D.O."/>
            <person name="Alex L.A."/>
            <person name="Mannhaupt G."/>
            <person name="Ebbole D.J."/>
            <person name="Freitag M."/>
            <person name="Paulsen I."/>
            <person name="Sachs M.S."/>
            <person name="Lander E.S."/>
            <person name="Nusbaum C."/>
            <person name="Birren B.W."/>
        </authorList>
    </citation>
    <scope>NUCLEOTIDE SEQUENCE [LARGE SCALE GENOMIC DNA]</scope>
    <source>
        <strain>ATCC 24698 / 74-OR23-1A / CBS 708.71 / DSM 1257 / FGSC 987</strain>
    </source>
</reference>
<gene>
    <name type="primary">pgk-1</name>
    <name type="synonym">pgk</name>
    <name type="synonym">pgka</name>
    <name type="ORF">NCU07914</name>
</gene>
<evidence type="ECO:0000250" key="1">
    <source>
        <dbReference type="UniProtKB" id="A0A7G5KET3"/>
    </source>
</evidence>
<evidence type="ECO:0000250" key="2">
    <source>
        <dbReference type="UniProtKB" id="P00558"/>
    </source>
</evidence>
<evidence type="ECO:0000250" key="3">
    <source>
        <dbReference type="UniProtKB" id="P00560"/>
    </source>
</evidence>
<evidence type="ECO:0000250" key="4">
    <source>
        <dbReference type="UniProtKB" id="Q7SIB7"/>
    </source>
</evidence>
<evidence type="ECO:0000305" key="5"/>
<comment type="function">
    <text evidence="1 2 3">Catalyzes one of the two ATP producing reactions in the glycolytic pathway via the reversible conversion of 1,3-diphosphoglycerate to 3-phosphoglycerate (By similarity). Both L- and D- forms of purine and pyrimidine nucleotides can be used as substrates, but the activity is much lower on pyrimidines (By similarity). Negatively regulates the biosynthesis of acetyl-CoA from pyruvate in the mitochondrion (By similarity).</text>
</comment>
<comment type="catalytic activity">
    <reaction evidence="3">
        <text>(2R)-3-phosphoglycerate + ATP = (2R)-3-phospho-glyceroyl phosphate + ADP</text>
        <dbReference type="Rhea" id="RHEA:14801"/>
        <dbReference type="ChEBI" id="CHEBI:30616"/>
        <dbReference type="ChEBI" id="CHEBI:57604"/>
        <dbReference type="ChEBI" id="CHEBI:58272"/>
        <dbReference type="ChEBI" id="CHEBI:456216"/>
        <dbReference type="EC" id="2.7.2.3"/>
    </reaction>
</comment>
<comment type="cofactor">
    <cofactor evidence="2">
        <name>Mg(2+)</name>
        <dbReference type="ChEBI" id="CHEBI:18420"/>
    </cofactor>
</comment>
<comment type="pathway">
    <text evidence="3">Carbohydrate degradation; glycolysis; pyruvate from D-glyceraldehyde 3-phosphate: step 2/5.</text>
</comment>
<comment type="subunit">
    <text>Monomer.</text>
</comment>
<comment type="subcellular location">
    <subcellularLocation>
        <location evidence="3">Cytoplasm</location>
    </subcellularLocation>
    <subcellularLocation>
        <location evidence="3">Mitochondrion</location>
    </subcellularLocation>
</comment>
<comment type="similarity">
    <text evidence="5">Belongs to the phosphoglycerate kinase family.</text>
</comment>
<proteinExistence type="evidence at transcript level"/>
<feature type="chain" id="PRO_0000145883" description="Phosphoglycerate kinase">
    <location>
        <begin position="1"/>
        <end position="418"/>
    </location>
</feature>
<feature type="binding site" evidence="2">
    <location>
        <position position="23"/>
    </location>
    <ligand>
        <name>(2R)-3-phosphoglycerate</name>
        <dbReference type="ChEBI" id="CHEBI:58272"/>
    </ligand>
</feature>
<feature type="binding site" evidence="4">
    <location>
        <position position="24"/>
    </location>
    <ligand>
        <name>(2R)-3-phosphoglycerate</name>
        <dbReference type="ChEBI" id="CHEBI:58272"/>
    </ligand>
</feature>
<feature type="binding site" evidence="2">
    <location>
        <position position="25"/>
    </location>
    <ligand>
        <name>(2R)-3-phosphoglycerate</name>
        <dbReference type="ChEBI" id="CHEBI:58272"/>
    </ligand>
</feature>
<feature type="binding site" evidence="4">
    <location>
        <position position="26"/>
    </location>
    <ligand>
        <name>(2R)-3-phosphoglycerate</name>
        <dbReference type="ChEBI" id="CHEBI:58272"/>
    </ligand>
</feature>
<feature type="binding site" evidence="2">
    <location>
        <position position="39"/>
    </location>
    <ligand>
        <name>(2R)-3-phosphoglycerate</name>
        <dbReference type="ChEBI" id="CHEBI:58272"/>
    </ligand>
</feature>
<feature type="binding site" evidence="4">
    <location>
        <position position="40"/>
    </location>
    <ligand>
        <name>(2R)-3-phosphoglycerate</name>
        <dbReference type="ChEBI" id="CHEBI:58272"/>
    </ligand>
</feature>
<feature type="binding site" evidence="2">
    <location>
        <position position="63"/>
    </location>
    <ligand>
        <name>(2R)-3-phosphoglycerate</name>
        <dbReference type="ChEBI" id="CHEBI:58272"/>
    </ligand>
</feature>
<feature type="binding site" evidence="4">
    <location>
        <position position="64"/>
    </location>
    <ligand>
        <name>(2R)-3-phosphoglycerate</name>
        <dbReference type="ChEBI" id="CHEBI:58272"/>
    </ligand>
</feature>
<feature type="binding site" evidence="2">
    <location>
        <position position="66"/>
    </location>
    <ligand>
        <name>(2R)-3-phosphoglycerate</name>
        <dbReference type="ChEBI" id="CHEBI:58272"/>
    </ligand>
</feature>
<feature type="binding site" evidence="4">
    <location>
        <position position="67"/>
    </location>
    <ligand>
        <name>(2R)-3-phosphoglycerate</name>
        <dbReference type="ChEBI" id="CHEBI:58272"/>
    </ligand>
</feature>
<feature type="binding site" evidence="2">
    <location>
        <position position="122"/>
    </location>
    <ligand>
        <name>(2R)-3-phosphoglycerate</name>
        <dbReference type="ChEBI" id="CHEBI:58272"/>
    </ligand>
</feature>
<feature type="binding site" evidence="4">
    <location>
        <position position="123"/>
    </location>
    <ligand>
        <name>(2R)-3-phosphoglycerate</name>
        <dbReference type="ChEBI" id="CHEBI:58272"/>
    </ligand>
</feature>
<feature type="binding site" evidence="2">
    <location>
        <position position="170"/>
    </location>
    <ligand>
        <name>(2R)-3-phosphoglycerate</name>
        <dbReference type="ChEBI" id="CHEBI:58272"/>
    </ligand>
</feature>
<feature type="binding site" evidence="4">
    <location>
        <position position="171"/>
    </location>
    <ligand>
        <name>(2R)-3-phosphoglycerate</name>
        <dbReference type="ChEBI" id="CHEBI:58272"/>
    </ligand>
</feature>
<feature type="binding site" evidence="2">
    <location>
        <position position="214"/>
    </location>
    <ligand>
        <name>ADP</name>
        <dbReference type="ChEBI" id="CHEBI:456216"/>
    </ligand>
</feature>
<feature type="binding site" evidence="2">
    <location>
        <position position="214"/>
    </location>
    <ligand>
        <name>CDP</name>
        <dbReference type="ChEBI" id="CHEBI:58069"/>
    </ligand>
</feature>
<feature type="binding site" evidence="4">
    <location>
        <position position="215"/>
    </location>
    <ligand>
        <name>AMP</name>
        <dbReference type="ChEBI" id="CHEBI:456215"/>
    </ligand>
</feature>
<feature type="binding site" evidence="4">
    <location>
        <position position="215"/>
    </location>
    <ligand>
        <name>ATP</name>
        <dbReference type="ChEBI" id="CHEBI:30616"/>
    </ligand>
</feature>
<feature type="binding site" evidence="2">
    <location>
        <position position="215"/>
    </location>
    <ligand>
        <name>Mg(2+)</name>
        <dbReference type="ChEBI" id="CHEBI:18420"/>
    </ligand>
</feature>
<feature type="binding site" evidence="4">
    <location>
        <position position="216"/>
    </location>
    <ligand>
        <name>AMP</name>
        <dbReference type="ChEBI" id="CHEBI:456215"/>
    </ligand>
</feature>
<feature type="binding site" evidence="2">
    <location>
        <position position="219"/>
    </location>
    <ligand>
        <name>CDP</name>
        <dbReference type="ChEBI" id="CHEBI:58069"/>
    </ligand>
</feature>
<feature type="binding site" evidence="2">
    <location>
        <position position="219"/>
    </location>
    <ligand>
        <name>Mg(2+)</name>
        <dbReference type="ChEBI" id="CHEBI:18420"/>
    </ligand>
</feature>
<feature type="binding site" evidence="4">
    <location>
        <position position="220"/>
    </location>
    <ligand>
        <name>AMP</name>
        <dbReference type="ChEBI" id="CHEBI:456215"/>
    </ligand>
</feature>
<feature type="binding site" evidence="4">
    <location>
        <position position="220"/>
    </location>
    <ligand>
        <name>ATP</name>
        <dbReference type="ChEBI" id="CHEBI:30616"/>
    </ligand>
</feature>
<feature type="binding site" evidence="2">
    <location>
        <position position="238"/>
    </location>
    <ligand>
        <name>ADP</name>
        <dbReference type="ChEBI" id="CHEBI:456216"/>
    </ligand>
</feature>
<feature type="binding site" evidence="2">
    <location>
        <position position="238"/>
    </location>
    <ligand>
        <name>CDP</name>
        <dbReference type="ChEBI" id="CHEBI:58069"/>
    </ligand>
</feature>
<feature type="binding site" evidence="4">
    <location>
        <position position="239"/>
    </location>
    <ligand>
        <name>AMP</name>
        <dbReference type="ChEBI" id="CHEBI:456215"/>
    </ligand>
</feature>
<feature type="binding site" evidence="4">
    <location>
        <position position="239"/>
    </location>
    <ligand>
        <name>ATP</name>
        <dbReference type="ChEBI" id="CHEBI:30616"/>
    </ligand>
</feature>
<feature type="binding site" evidence="4">
    <location>
        <position position="313"/>
    </location>
    <ligand>
        <name>AMP</name>
        <dbReference type="ChEBI" id="CHEBI:456215"/>
    </ligand>
</feature>
<feature type="binding site" evidence="4">
    <location>
        <position position="313"/>
    </location>
    <ligand>
        <name>ATP</name>
        <dbReference type="ChEBI" id="CHEBI:30616"/>
    </ligand>
</feature>
<feature type="binding site" evidence="2">
    <location>
        <position position="338"/>
    </location>
    <ligand>
        <name>CDP</name>
        <dbReference type="ChEBI" id="CHEBI:58069"/>
    </ligand>
</feature>
<feature type="binding site" evidence="2">
    <location>
        <position position="340"/>
    </location>
    <ligand>
        <name>CDP</name>
        <dbReference type="ChEBI" id="CHEBI:58069"/>
    </ligand>
</feature>
<feature type="binding site" evidence="2">
    <location>
        <position position="343"/>
    </location>
    <ligand>
        <name>ADP</name>
        <dbReference type="ChEBI" id="CHEBI:456216"/>
    </ligand>
</feature>
<feature type="binding site" evidence="2">
    <location>
        <position position="343"/>
    </location>
    <ligand>
        <name>CDP</name>
        <dbReference type="ChEBI" id="CHEBI:58069"/>
    </ligand>
</feature>
<feature type="binding site" evidence="4">
    <location>
        <position position="344"/>
    </location>
    <ligand>
        <name>AMP</name>
        <dbReference type="ChEBI" id="CHEBI:456215"/>
    </ligand>
</feature>
<feature type="binding site" evidence="4">
    <location>
        <position position="344"/>
    </location>
    <ligand>
        <name>ATP</name>
        <dbReference type="ChEBI" id="CHEBI:30616"/>
    </ligand>
</feature>
<feature type="binding site" evidence="4">
    <location>
        <position position="375"/>
    </location>
    <ligand>
        <name>ATP</name>
        <dbReference type="ChEBI" id="CHEBI:30616"/>
    </ligand>
</feature>
<feature type="binding site" evidence="4">
    <location>
        <position position="375"/>
    </location>
    <ligand>
        <name>Mg(2+)</name>
        <dbReference type="ChEBI" id="CHEBI:18420"/>
    </ligand>
</feature>
<feature type="binding site" evidence="4">
    <location>
        <position position="376"/>
    </location>
    <ligand>
        <name>ATP</name>
        <dbReference type="ChEBI" id="CHEBI:30616"/>
    </ligand>
</feature>
<feature type="sequence conflict" description="In Ref. 1; CAA39865." evidence="5" ref="1">
    <original>G</original>
    <variation>R</variation>
    <location>
        <position position="70"/>
    </location>
</feature>
<dbReference type="EC" id="2.7.2.3" evidence="3"/>
<dbReference type="EMBL" id="X56512">
    <property type="protein sequence ID" value="CAA39865.1"/>
    <property type="molecule type" value="mRNA"/>
</dbReference>
<dbReference type="EMBL" id="CM002239">
    <property type="protein sequence ID" value="EAA33194.1"/>
    <property type="molecule type" value="Genomic_DNA"/>
</dbReference>
<dbReference type="PIR" id="A56616">
    <property type="entry name" value="A56616"/>
</dbReference>
<dbReference type="PIR" id="T43864">
    <property type="entry name" value="T43864"/>
</dbReference>
<dbReference type="RefSeq" id="XP_962430.1">
    <property type="nucleotide sequence ID" value="XM_957337.3"/>
</dbReference>
<dbReference type="SMR" id="P38667"/>
<dbReference type="FunCoup" id="P38667">
    <property type="interactions" value="692"/>
</dbReference>
<dbReference type="STRING" id="367110.P38667"/>
<dbReference type="PaxDb" id="5141-EFNCRP00000008201"/>
<dbReference type="EnsemblFungi" id="EAA33194">
    <property type="protein sequence ID" value="EAA33194"/>
    <property type="gene ID" value="NCU07914"/>
</dbReference>
<dbReference type="GeneID" id="3878602"/>
<dbReference type="KEGG" id="ncr:NCU07914"/>
<dbReference type="VEuPathDB" id="FungiDB:NCU07914"/>
<dbReference type="HOGENOM" id="CLU_025427_0_0_1"/>
<dbReference type="InParanoid" id="P38667"/>
<dbReference type="OMA" id="DMIFDIG"/>
<dbReference type="OrthoDB" id="275353at2759"/>
<dbReference type="UniPathway" id="UPA00109">
    <property type="reaction ID" value="UER00185"/>
</dbReference>
<dbReference type="Proteomes" id="UP000001805">
    <property type="component" value="Chromosome 4, Linkage Group IV"/>
</dbReference>
<dbReference type="GO" id="GO:0005829">
    <property type="term" value="C:cytosol"/>
    <property type="evidence" value="ECO:0000318"/>
    <property type="project" value="GO_Central"/>
</dbReference>
<dbReference type="GO" id="GO:0005739">
    <property type="term" value="C:mitochondrion"/>
    <property type="evidence" value="ECO:0007669"/>
    <property type="project" value="UniProtKB-SubCell"/>
</dbReference>
<dbReference type="GO" id="GO:0043531">
    <property type="term" value="F:ADP binding"/>
    <property type="evidence" value="ECO:0000318"/>
    <property type="project" value="GO_Central"/>
</dbReference>
<dbReference type="GO" id="GO:0005524">
    <property type="term" value="F:ATP binding"/>
    <property type="evidence" value="ECO:0000318"/>
    <property type="project" value="GO_Central"/>
</dbReference>
<dbReference type="GO" id="GO:0046872">
    <property type="term" value="F:metal ion binding"/>
    <property type="evidence" value="ECO:0007669"/>
    <property type="project" value="UniProtKB-KW"/>
</dbReference>
<dbReference type="GO" id="GO:0004618">
    <property type="term" value="F:phosphoglycerate kinase activity"/>
    <property type="evidence" value="ECO:0000318"/>
    <property type="project" value="GO_Central"/>
</dbReference>
<dbReference type="GO" id="GO:0006094">
    <property type="term" value="P:gluconeogenesis"/>
    <property type="evidence" value="ECO:0000318"/>
    <property type="project" value="GO_Central"/>
</dbReference>
<dbReference type="GO" id="GO:0006096">
    <property type="term" value="P:glycolytic process"/>
    <property type="evidence" value="ECO:0000318"/>
    <property type="project" value="GO_Central"/>
</dbReference>
<dbReference type="CDD" id="cd00318">
    <property type="entry name" value="Phosphoglycerate_kinase"/>
    <property type="match status" value="1"/>
</dbReference>
<dbReference type="FunFam" id="3.40.50.1260:FF:000019">
    <property type="entry name" value="Phosphoglycerate kinase 1"/>
    <property type="match status" value="1"/>
</dbReference>
<dbReference type="FunFam" id="3.40.50.1260:FF:000031">
    <property type="entry name" value="Phosphoglycerate kinase 1"/>
    <property type="match status" value="1"/>
</dbReference>
<dbReference type="Gene3D" id="3.40.50.1260">
    <property type="entry name" value="Phosphoglycerate kinase, N-terminal domain"/>
    <property type="match status" value="3"/>
</dbReference>
<dbReference type="HAMAP" id="MF_00145">
    <property type="entry name" value="Phosphoglyc_kinase"/>
    <property type="match status" value="1"/>
</dbReference>
<dbReference type="InterPro" id="IPR001576">
    <property type="entry name" value="Phosphoglycerate_kinase"/>
</dbReference>
<dbReference type="InterPro" id="IPR015911">
    <property type="entry name" value="Phosphoglycerate_kinase_CS"/>
</dbReference>
<dbReference type="InterPro" id="IPR015824">
    <property type="entry name" value="Phosphoglycerate_kinase_N"/>
</dbReference>
<dbReference type="InterPro" id="IPR036043">
    <property type="entry name" value="Phosphoglycerate_kinase_sf"/>
</dbReference>
<dbReference type="PANTHER" id="PTHR11406">
    <property type="entry name" value="PHOSPHOGLYCERATE KINASE"/>
    <property type="match status" value="1"/>
</dbReference>
<dbReference type="PANTHER" id="PTHR11406:SF0">
    <property type="entry name" value="PHOSPHOGLYCERATE KINASE"/>
    <property type="match status" value="1"/>
</dbReference>
<dbReference type="Pfam" id="PF00162">
    <property type="entry name" value="PGK"/>
    <property type="match status" value="1"/>
</dbReference>
<dbReference type="PIRSF" id="PIRSF000724">
    <property type="entry name" value="Pgk"/>
    <property type="match status" value="1"/>
</dbReference>
<dbReference type="PRINTS" id="PR00477">
    <property type="entry name" value="PHGLYCKINASE"/>
</dbReference>
<dbReference type="SUPFAM" id="SSF53748">
    <property type="entry name" value="Phosphoglycerate kinase"/>
    <property type="match status" value="1"/>
</dbReference>
<dbReference type="PROSITE" id="PS00111">
    <property type="entry name" value="PGLYCERATE_KINASE"/>
    <property type="match status" value="1"/>
</dbReference>